<dbReference type="EC" id="1.2.1.41" evidence="1"/>
<dbReference type="EMBL" id="AM286415">
    <property type="protein sequence ID" value="CAL13233.1"/>
    <property type="molecule type" value="Genomic_DNA"/>
</dbReference>
<dbReference type="RefSeq" id="YP_001007378.1">
    <property type="nucleotide sequence ID" value="NC_008800.1"/>
</dbReference>
<dbReference type="SMR" id="A1JNX6"/>
<dbReference type="KEGG" id="yen:YE3201"/>
<dbReference type="PATRIC" id="fig|393305.7.peg.3404"/>
<dbReference type="eggNOG" id="COG0014">
    <property type="taxonomic scope" value="Bacteria"/>
</dbReference>
<dbReference type="HOGENOM" id="CLU_030231_0_0_6"/>
<dbReference type="OrthoDB" id="9809970at2"/>
<dbReference type="UniPathway" id="UPA00098">
    <property type="reaction ID" value="UER00360"/>
</dbReference>
<dbReference type="Proteomes" id="UP000000642">
    <property type="component" value="Chromosome"/>
</dbReference>
<dbReference type="GO" id="GO:0005737">
    <property type="term" value="C:cytoplasm"/>
    <property type="evidence" value="ECO:0007669"/>
    <property type="project" value="UniProtKB-SubCell"/>
</dbReference>
<dbReference type="GO" id="GO:0004350">
    <property type="term" value="F:glutamate-5-semialdehyde dehydrogenase activity"/>
    <property type="evidence" value="ECO:0007669"/>
    <property type="project" value="UniProtKB-UniRule"/>
</dbReference>
<dbReference type="GO" id="GO:0050661">
    <property type="term" value="F:NADP binding"/>
    <property type="evidence" value="ECO:0007669"/>
    <property type="project" value="InterPro"/>
</dbReference>
<dbReference type="GO" id="GO:0055129">
    <property type="term" value="P:L-proline biosynthetic process"/>
    <property type="evidence" value="ECO:0007669"/>
    <property type="project" value="UniProtKB-UniRule"/>
</dbReference>
<dbReference type="CDD" id="cd07079">
    <property type="entry name" value="ALDH_F18-19_ProA-GPR"/>
    <property type="match status" value="1"/>
</dbReference>
<dbReference type="FunFam" id="3.40.309.10:FF:000006">
    <property type="entry name" value="Gamma-glutamyl phosphate reductase"/>
    <property type="match status" value="1"/>
</dbReference>
<dbReference type="Gene3D" id="3.40.605.10">
    <property type="entry name" value="Aldehyde Dehydrogenase, Chain A, domain 1"/>
    <property type="match status" value="1"/>
</dbReference>
<dbReference type="Gene3D" id="3.40.309.10">
    <property type="entry name" value="Aldehyde Dehydrogenase, Chain A, domain 2"/>
    <property type="match status" value="1"/>
</dbReference>
<dbReference type="HAMAP" id="MF_00412">
    <property type="entry name" value="ProA"/>
    <property type="match status" value="1"/>
</dbReference>
<dbReference type="InterPro" id="IPR016161">
    <property type="entry name" value="Ald_DH/histidinol_DH"/>
</dbReference>
<dbReference type="InterPro" id="IPR016163">
    <property type="entry name" value="Ald_DH_C"/>
</dbReference>
<dbReference type="InterPro" id="IPR016162">
    <property type="entry name" value="Ald_DH_N"/>
</dbReference>
<dbReference type="InterPro" id="IPR015590">
    <property type="entry name" value="Aldehyde_DH_dom"/>
</dbReference>
<dbReference type="InterPro" id="IPR020593">
    <property type="entry name" value="G-glutamylP_reductase_CS"/>
</dbReference>
<dbReference type="InterPro" id="IPR012134">
    <property type="entry name" value="Glu-5-SA_DH"/>
</dbReference>
<dbReference type="InterPro" id="IPR000965">
    <property type="entry name" value="GPR_dom"/>
</dbReference>
<dbReference type="NCBIfam" id="NF001221">
    <property type="entry name" value="PRK00197.1"/>
    <property type="match status" value="1"/>
</dbReference>
<dbReference type="NCBIfam" id="TIGR00407">
    <property type="entry name" value="proA"/>
    <property type="match status" value="1"/>
</dbReference>
<dbReference type="PANTHER" id="PTHR11063:SF8">
    <property type="entry name" value="DELTA-1-PYRROLINE-5-CARBOXYLATE SYNTHASE"/>
    <property type="match status" value="1"/>
</dbReference>
<dbReference type="PANTHER" id="PTHR11063">
    <property type="entry name" value="GLUTAMATE SEMIALDEHYDE DEHYDROGENASE"/>
    <property type="match status" value="1"/>
</dbReference>
<dbReference type="Pfam" id="PF00171">
    <property type="entry name" value="Aldedh"/>
    <property type="match status" value="1"/>
</dbReference>
<dbReference type="PIRSF" id="PIRSF000151">
    <property type="entry name" value="GPR"/>
    <property type="match status" value="1"/>
</dbReference>
<dbReference type="SUPFAM" id="SSF53720">
    <property type="entry name" value="ALDH-like"/>
    <property type="match status" value="1"/>
</dbReference>
<dbReference type="PROSITE" id="PS01223">
    <property type="entry name" value="PROA"/>
    <property type="match status" value="1"/>
</dbReference>
<keyword id="KW-0028">Amino-acid biosynthesis</keyword>
<keyword id="KW-0963">Cytoplasm</keyword>
<keyword id="KW-0521">NADP</keyword>
<keyword id="KW-0560">Oxidoreductase</keyword>
<keyword id="KW-0641">Proline biosynthesis</keyword>
<comment type="function">
    <text evidence="1">Catalyzes the NADPH-dependent reduction of L-glutamate 5-phosphate into L-glutamate 5-semialdehyde and phosphate. The product spontaneously undergoes cyclization to form 1-pyrroline-5-carboxylate.</text>
</comment>
<comment type="catalytic activity">
    <reaction evidence="1">
        <text>L-glutamate 5-semialdehyde + phosphate + NADP(+) = L-glutamyl 5-phosphate + NADPH + H(+)</text>
        <dbReference type="Rhea" id="RHEA:19541"/>
        <dbReference type="ChEBI" id="CHEBI:15378"/>
        <dbReference type="ChEBI" id="CHEBI:43474"/>
        <dbReference type="ChEBI" id="CHEBI:57783"/>
        <dbReference type="ChEBI" id="CHEBI:58066"/>
        <dbReference type="ChEBI" id="CHEBI:58274"/>
        <dbReference type="ChEBI" id="CHEBI:58349"/>
        <dbReference type="EC" id="1.2.1.41"/>
    </reaction>
</comment>
<comment type="pathway">
    <text evidence="1">Amino-acid biosynthesis; L-proline biosynthesis; L-glutamate 5-semialdehyde from L-glutamate: step 2/2.</text>
</comment>
<comment type="subcellular location">
    <subcellularLocation>
        <location evidence="1">Cytoplasm</location>
    </subcellularLocation>
</comment>
<comment type="similarity">
    <text evidence="1">Belongs to the gamma-glutamyl phosphate reductase family.</text>
</comment>
<proteinExistence type="inferred from homology"/>
<feature type="chain" id="PRO_1000050004" description="Gamma-glutamyl phosphate reductase">
    <location>
        <begin position="1"/>
        <end position="419"/>
    </location>
</feature>
<reference key="1">
    <citation type="journal article" date="2006" name="PLoS Genet.">
        <title>The complete genome sequence and comparative genome analysis of the high pathogenicity Yersinia enterocolitica strain 8081.</title>
        <authorList>
            <person name="Thomson N.R."/>
            <person name="Howard S."/>
            <person name="Wren B.W."/>
            <person name="Holden M.T.G."/>
            <person name="Crossman L."/>
            <person name="Challis G.L."/>
            <person name="Churcher C."/>
            <person name="Mungall K."/>
            <person name="Brooks K."/>
            <person name="Chillingworth T."/>
            <person name="Feltwell T."/>
            <person name="Abdellah Z."/>
            <person name="Hauser H."/>
            <person name="Jagels K."/>
            <person name="Maddison M."/>
            <person name="Moule S."/>
            <person name="Sanders M."/>
            <person name="Whitehead S."/>
            <person name="Quail M.A."/>
            <person name="Dougan G."/>
            <person name="Parkhill J."/>
            <person name="Prentice M.B."/>
        </authorList>
    </citation>
    <scope>NUCLEOTIDE SEQUENCE [LARGE SCALE GENOMIC DNA]</scope>
    <source>
        <strain>NCTC 13174 / 8081</strain>
    </source>
</reference>
<evidence type="ECO:0000255" key="1">
    <source>
        <dbReference type="HAMAP-Rule" id="MF_00412"/>
    </source>
</evidence>
<organism>
    <name type="scientific">Yersinia enterocolitica serotype O:8 / biotype 1B (strain NCTC 13174 / 8081)</name>
    <dbReference type="NCBI Taxonomy" id="393305"/>
    <lineage>
        <taxon>Bacteria</taxon>
        <taxon>Pseudomonadati</taxon>
        <taxon>Pseudomonadota</taxon>
        <taxon>Gammaproteobacteria</taxon>
        <taxon>Enterobacterales</taxon>
        <taxon>Yersiniaceae</taxon>
        <taxon>Yersinia</taxon>
    </lineage>
</organism>
<protein>
    <recommendedName>
        <fullName evidence="1">Gamma-glutamyl phosphate reductase</fullName>
        <shortName evidence="1">GPR</shortName>
        <ecNumber evidence="1">1.2.1.41</ecNumber>
    </recommendedName>
    <alternativeName>
        <fullName evidence="1">Glutamate-5-semialdehyde dehydrogenase</fullName>
    </alternativeName>
    <alternativeName>
        <fullName evidence="1">Glutamyl-gamma-semialdehyde dehydrogenase</fullName>
        <shortName evidence="1">GSA dehydrogenase</shortName>
    </alternativeName>
</protein>
<name>PROA_YERE8</name>
<accession>A1JNX6</accession>
<gene>
    <name evidence="1" type="primary">proA</name>
    <name type="ordered locus">YE3201</name>
</gene>
<sequence>MSMLEQMGKAAKQASWQLAMLSTAKKNQALAVIANLLESESQAILQANEQDMAAARDSGMSEALLDRLLLSPARLAAIANDVRQVCRLNDPVGRVIDGSLLDSGLKLERRRVPLGVIGVIYEARPNVTIDVASLCLKTGNAVILRGGKETHHTNQATVKVIQQALEQCGLPPAAVQAIESPDRELVTQLLRMDNYIDMLIPRGGAGLHKLCREQSTIPVITGGIGVCHTFVDESADFEKALLVIENAKIQRPSACNSLETLLVHQEIAARFLPILSDRMHAFGVTLHASPQAMPFLAEGKARVVAVEAADYDDEWLSLDLNVEIVADINAAISHIREHGTSHSDAILTRSLGNAEHFVRAVDSSAVYVNASTRFTDGGQFGLGAEVAVSTQKLHARGPMGLDALTTYKWIGYGDDLVRS</sequence>